<evidence type="ECO:0000250" key="1">
    <source>
        <dbReference type="UniProtKB" id="P07766"/>
    </source>
</evidence>
<evidence type="ECO:0000250" key="2">
    <source>
        <dbReference type="UniProtKB" id="P22646"/>
    </source>
</evidence>
<evidence type="ECO:0000255" key="3"/>
<evidence type="ECO:0000255" key="4">
    <source>
        <dbReference type="PROSITE-ProRule" id="PRU00379"/>
    </source>
</evidence>
<evidence type="ECO:0000256" key="5">
    <source>
        <dbReference type="SAM" id="MobiDB-lite"/>
    </source>
</evidence>
<dbReference type="EMBL" id="BC102243">
    <property type="protein sequence ID" value="AAI02244.1"/>
    <property type="molecule type" value="mRNA"/>
</dbReference>
<dbReference type="EMBL" id="X53270">
    <property type="protein sequence ID" value="CAA37368.1"/>
    <property type="molecule type" value="mRNA"/>
</dbReference>
<dbReference type="PIR" id="C60232">
    <property type="entry name" value="C60232"/>
</dbReference>
<dbReference type="RefSeq" id="NP_776436.1">
    <property type="nucleotide sequence ID" value="NM_174011.3"/>
</dbReference>
<dbReference type="SMR" id="Q28073"/>
<dbReference type="FunCoup" id="Q28073">
    <property type="interactions" value="504"/>
</dbReference>
<dbReference type="STRING" id="9913.ENSBTAP00000062622"/>
<dbReference type="GlyCosmos" id="Q28073">
    <property type="glycosylation" value="1 site, No reported glycans"/>
</dbReference>
<dbReference type="GlyGen" id="Q28073">
    <property type="glycosylation" value="1 site"/>
</dbReference>
<dbReference type="PaxDb" id="9913-ENSBTAP00000020859"/>
<dbReference type="PeptideAtlas" id="Q28073"/>
<dbReference type="GeneID" id="281054"/>
<dbReference type="KEGG" id="bta:281054"/>
<dbReference type="CTD" id="916"/>
<dbReference type="VEuPathDB" id="HostDB:ENSBTAG00000015710"/>
<dbReference type="eggNOG" id="ENOG502S8KB">
    <property type="taxonomic scope" value="Eukaryota"/>
</dbReference>
<dbReference type="HOGENOM" id="CLU_117945_0_0_1"/>
<dbReference type="InParanoid" id="Q28073"/>
<dbReference type="OMA" id="RVVLTCP"/>
<dbReference type="OrthoDB" id="9947847at2759"/>
<dbReference type="TreeFam" id="TF335892"/>
<dbReference type="Reactome" id="R-BTA-198933">
    <property type="pathway name" value="Immunoregulatory interactions between a Lymphoid and a non-Lymphoid cell"/>
</dbReference>
<dbReference type="Reactome" id="R-BTA-202424">
    <property type="pathway name" value="Downstream TCR signaling"/>
</dbReference>
<dbReference type="Reactome" id="R-BTA-202427">
    <property type="pathway name" value="Phosphorylation of CD3 and TCR zeta chains"/>
</dbReference>
<dbReference type="Reactome" id="R-BTA-202430">
    <property type="pathway name" value="Translocation of ZAP-70 to Immunological synapse"/>
</dbReference>
<dbReference type="Reactome" id="R-BTA-202433">
    <property type="pathway name" value="Generation of second messenger molecules"/>
</dbReference>
<dbReference type="Reactome" id="R-BTA-389948">
    <property type="pathway name" value="Co-inhibition by PD-1"/>
</dbReference>
<dbReference type="Proteomes" id="UP000009136">
    <property type="component" value="Chromosome 15"/>
</dbReference>
<dbReference type="Bgee" id="ENSBTAG00000015710">
    <property type="expression patterns" value="Expressed in thymus and 103 other cell types or tissues"/>
</dbReference>
<dbReference type="GO" id="GO:0042105">
    <property type="term" value="C:alpha-beta T cell receptor complex"/>
    <property type="evidence" value="ECO:0000318"/>
    <property type="project" value="GO_Central"/>
</dbReference>
<dbReference type="GO" id="GO:0009897">
    <property type="term" value="C:external side of plasma membrane"/>
    <property type="evidence" value="ECO:0000318"/>
    <property type="project" value="GO_Central"/>
</dbReference>
<dbReference type="GO" id="GO:0004888">
    <property type="term" value="F:transmembrane signaling receptor activity"/>
    <property type="evidence" value="ECO:0000318"/>
    <property type="project" value="GO_Central"/>
</dbReference>
<dbReference type="GO" id="GO:0002250">
    <property type="term" value="P:adaptive immune response"/>
    <property type="evidence" value="ECO:0007669"/>
    <property type="project" value="UniProtKB-KW"/>
</dbReference>
<dbReference type="GO" id="GO:0007166">
    <property type="term" value="P:cell surface receptor signaling pathway"/>
    <property type="evidence" value="ECO:0000318"/>
    <property type="project" value="GO_Central"/>
</dbReference>
<dbReference type="GO" id="GO:0045059">
    <property type="term" value="P:positive thymic T cell selection"/>
    <property type="evidence" value="ECO:0000318"/>
    <property type="project" value="GO_Central"/>
</dbReference>
<dbReference type="FunFam" id="2.60.40.10:FF:001422">
    <property type="entry name" value="T-cell surface glycoprotein CD3 epsilon chain"/>
    <property type="match status" value="1"/>
</dbReference>
<dbReference type="Gene3D" id="2.60.40.10">
    <property type="entry name" value="Immunoglobulins"/>
    <property type="match status" value="1"/>
</dbReference>
<dbReference type="InterPro" id="IPR015484">
    <property type="entry name" value="CD3_esu/gsu/dsu"/>
</dbReference>
<dbReference type="InterPro" id="IPR036179">
    <property type="entry name" value="Ig-like_dom_sf"/>
</dbReference>
<dbReference type="InterPro" id="IPR013783">
    <property type="entry name" value="Ig-like_fold"/>
</dbReference>
<dbReference type="InterPro" id="IPR003598">
    <property type="entry name" value="Ig_sub2"/>
</dbReference>
<dbReference type="InterPro" id="IPR003110">
    <property type="entry name" value="Phos_immunorcpt_sig_ITAM"/>
</dbReference>
<dbReference type="PANTHER" id="PTHR10570:SF9">
    <property type="entry name" value="T-CELL SURFACE GLYCOPROTEIN CD3 EPSILON CHAIN"/>
    <property type="match status" value="1"/>
</dbReference>
<dbReference type="PANTHER" id="PTHR10570">
    <property type="entry name" value="T-CELL SURFACE GLYCOPROTEIN CD3 GAMMA CHAIN / DELTA CHAIN"/>
    <property type="match status" value="1"/>
</dbReference>
<dbReference type="Pfam" id="PF16681">
    <property type="entry name" value="Ig_5"/>
    <property type="match status" value="1"/>
</dbReference>
<dbReference type="SMART" id="SM00408">
    <property type="entry name" value="IGc2"/>
    <property type="match status" value="1"/>
</dbReference>
<dbReference type="SMART" id="SM00077">
    <property type="entry name" value="ITAM"/>
    <property type="match status" value="1"/>
</dbReference>
<dbReference type="SUPFAM" id="SSF48726">
    <property type="entry name" value="Immunoglobulin"/>
    <property type="match status" value="1"/>
</dbReference>
<dbReference type="PROSITE" id="PS51055">
    <property type="entry name" value="ITAM_1"/>
    <property type="match status" value="1"/>
</dbReference>
<keyword id="KW-1064">Adaptive immunity</keyword>
<keyword id="KW-1003">Cell membrane</keyword>
<keyword id="KW-1015">Disulfide bond</keyword>
<keyword id="KW-0325">Glycoprotein</keyword>
<keyword id="KW-0391">Immunity</keyword>
<keyword id="KW-0393">Immunoglobulin domain</keyword>
<keyword id="KW-0472">Membrane</keyword>
<keyword id="KW-0597">Phosphoprotein</keyword>
<keyword id="KW-0675">Receptor</keyword>
<keyword id="KW-1185">Reference proteome</keyword>
<keyword id="KW-0732">Signal</keyword>
<keyword id="KW-0812">Transmembrane</keyword>
<keyword id="KW-1133">Transmembrane helix</keyword>
<reference key="1">
    <citation type="submission" date="2005-08" db="EMBL/GenBank/DDBJ databases">
        <authorList>
            <consortium name="NIH - Mammalian Gene Collection (MGC) project"/>
        </authorList>
    </citation>
    <scope>NUCLEOTIDE SEQUENCE [LARGE SCALE MRNA]</scope>
    <source>
        <strain>Crossbred X Angus</strain>
        <tissue>Ileum</tissue>
    </source>
</reference>
<reference key="2">
    <citation type="journal article" date="1990" name="Eur. J. Immunol.">
        <title>Identification of a bovine surface antigen uniquely expressed on CD4-CD8-T cell receptor gamma/delta+ T lymphocytes.</title>
        <authorList>
            <person name="Clevers H."/>
            <person name="Machugh N.D."/>
            <person name="Bensaid A."/>
            <person name="Dunlap S."/>
            <person name="Baldwin C.L."/>
            <person name="Kaushal A."/>
            <person name="Iams K."/>
            <person name="Howard C.J."/>
            <person name="Morrison W.I."/>
        </authorList>
    </citation>
    <scope>NUCLEOTIDE SEQUENCE [MRNA] OF 1-52</scope>
</reference>
<accession>Q28073</accession>
<accession>Q3ZCH2</accession>
<feature type="signal peptide" evidence="3">
    <location>
        <begin position="1"/>
        <end position="21"/>
    </location>
</feature>
<feature type="chain" id="PRO_0000014604" description="T-cell surface glycoprotein CD3 epsilon chain">
    <location>
        <begin position="22"/>
        <end position="192"/>
    </location>
</feature>
<feature type="topological domain" description="Extracellular" evidence="3">
    <location>
        <begin position="23"/>
        <end position="114"/>
    </location>
</feature>
<feature type="transmembrane region" description="Helical" evidence="3">
    <location>
        <begin position="115"/>
        <end position="135"/>
    </location>
</feature>
<feature type="topological domain" description="Cytoplasmic" evidence="3">
    <location>
        <begin position="136"/>
        <end position="192"/>
    </location>
</feature>
<feature type="domain" description="Ig-like">
    <location>
        <begin position="26"/>
        <end position="97"/>
    </location>
</feature>
<feature type="domain" description="ITAM" evidence="4">
    <location>
        <begin position="163"/>
        <end position="190"/>
    </location>
</feature>
<feature type="region of interest" description="Disordered" evidence="5">
    <location>
        <begin position="145"/>
        <end position="180"/>
    </location>
</feature>
<feature type="region of interest" description="NUMB-binding region" evidence="1">
    <location>
        <begin position="160"/>
        <end position="177"/>
    </location>
</feature>
<feature type="region of interest" description="Proline-rich sequence" evidence="1">
    <location>
        <begin position="164"/>
        <end position="171"/>
    </location>
</feature>
<feature type="modified residue" description="Phosphotyrosine" evidence="1 4">
    <location>
        <position position="173"/>
    </location>
</feature>
<feature type="modified residue" description="Phosphotyrosine" evidence="1 4">
    <location>
        <position position="184"/>
    </location>
</feature>
<feature type="glycosylation site" description="N-linked (GlcNAc...) asparagine" evidence="3">
    <location>
        <position position="72"/>
    </location>
</feature>
<feature type="disulfide bond" evidence="2">
    <location>
        <begin position="43"/>
        <end position="84"/>
    </location>
</feature>
<sequence>MQSGNLWRALGLCLLLVGAWAQDADEQKPYEVSISGNTVELTCPREFEGEIHWKQNDEQMKGYTGKQLLLENFSEMDNSGYYQCYMTEGNKEAAHTLYLKARVCQNCMEVNLMEVATIIVVDICVTLGLLLLVYYWSKSRKAKASPMTRGAGAGGRPRGQNKGRPPPVPNPDYEPIRKGQRDLYAGLNQRGV</sequence>
<protein>
    <recommendedName>
        <fullName>T-cell surface glycoprotein CD3 epsilon chain</fullName>
    </recommendedName>
    <cdAntigenName>CD3e</cdAntigenName>
</protein>
<name>CD3E_BOVIN</name>
<comment type="function">
    <text evidence="1 2">Part of the TCR-CD3 complex present on T-lymphocyte cell surface that plays an essential role in adaptive immune response. When antigen presenting cells (APCs) activate T-cell receptor (TCR), TCR-mediated signals are transmitted across the cell membrane by the CD3 chains CD3D, CD3E, CD3G and CD3Z. All CD3 chains contain immunoreceptor tyrosine-based activation motifs (ITAMs) in their cytoplasmic domain. Upon TCR engagement, these motifs become phosphorylated by Src family protein tyrosine kinases LCK and FYN, resulting in the activation of downstream signaling pathways. In addition of this role of signal transduction in T-cell activation, CD3E plays an essential role in correct T-cell development. Also participates in internalization and cell surface down-regulation of TCR-CD3 complexes via endocytosis sequences present in CD3E cytosolic region (By similarity). In addition to its role as a TCR coreceptor, it serves as a receptor for ITPRIPL1. Ligand recognition inhibits T-cell activation by promoting interaction with NCK1, which prevents CD3E-ZAP70 interaction and blocks the ERK-NFkB signaling cascade and calcium influx (By similarity).</text>
</comment>
<comment type="subunit">
    <text evidence="1 2">The TCR-CD3 complex is composed of a CD3D/CD3E and a CD3G/CD3E heterodimers that preferentially associate with TCRalpha and TCRbeta, respectively, to form TCRalpha/CD3E/CD3G and TCRbeta/CD3G/CD3E trimers. In turn, the hexamer interacts with CD3Z homodimer to form the TCR-CD3 complex. Alternatively, TCRalpha and TCRbeta can be replaced by TCRgamma and TCRdelta. Interacts with CD6. Interacts (via Proline-rich sequence) with NCK1; the interaction is ligand dependent but independent of tyrosine kinase activation.</text>
</comment>
<comment type="subcellular location">
    <subcellularLocation>
        <location evidence="1">Cell membrane</location>
        <topology evidence="1">Single-pass type I membrane protein</topology>
    </subcellularLocation>
</comment>
<comment type="PTM">
    <text evidence="1">Phosphorylated on Tyr residues after T-cell receptor triggering by LCK in association with CD4/CD8.</text>
</comment>
<organism>
    <name type="scientific">Bos taurus</name>
    <name type="common">Bovine</name>
    <dbReference type="NCBI Taxonomy" id="9913"/>
    <lineage>
        <taxon>Eukaryota</taxon>
        <taxon>Metazoa</taxon>
        <taxon>Chordata</taxon>
        <taxon>Craniata</taxon>
        <taxon>Vertebrata</taxon>
        <taxon>Euteleostomi</taxon>
        <taxon>Mammalia</taxon>
        <taxon>Eutheria</taxon>
        <taxon>Laurasiatheria</taxon>
        <taxon>Artiodactyla</taxon>
        <taxon>Ruminantia</taxon>
        <taxon>Pecora</taxon>
        <taxon>Bovidae</taxon>
        <taxon>Bovinae</taxon>
        <taxon>Bos</taxon>
    </lineage>
</organism>
<proteinExistence type="evidence at transcript level"/>
<gene>
    <name type="primary">CD3E</name>
</gene>